<name>ATPA_DESOH</name>
<sequence length="505" mass="54659">MEIRAEEISQIIKEQIRGFDKKVELSETGVVLSVGDGIARVYGLEKVMTMELVEFPGGILGLVLNLEEDNVGVAIMGEDTNIKEGDIVKRTGRIAQVPVGEAVLGRVVDTTGAPIDGKGPINASETRRIEVVAPGVIARKSVHEPCYTGLKAVDAMTPVGRGQRELIIGDRQIGKTAVAIDAILAQKDTDVYCIYVACGQKKSSVAQVAAILEKHGAMEYTTIVAACASDPASLQYLAPYAGCSMGEYFRDNGKHALIIYDDLSKQAAAYRQVSLLLRRPPGREAYPGDIFYNHSRLLERAAKLNDELGAGSLTALPIIETQAGDVSAFIPTNVISITDGQIYLEPNLFFAGIRPAINVGLSVSRVGGAAQVKAMKQVAGTLRLDMAQFRELEAFAAFGSDLDAATQRQLTRGARLVEILKQPQYKPLSMEKQVTILFAGTNGHLDELPLDAIAAYEAGLYTFIETKYPQVFADLKEKQAFTDEIKQTLTKALGEYGQEFKDTIK</sequence>
<gene>
    <name evidence="1" type="primary">atpA</name>
    <name type="ordered locus">Dole_0601</name>
</gene>
<feature type="chain" id="PRO_1000143368" description="ATP synthase subunit alpha">
    <location>
        <begin position="1"/>
        <end position="505"/>
    </location>
</feature>
<feature type="binding site" evidence="1">
    <location>
        <begin position="169"/>
        <end position="176"/>
    </location>
    <ligand>
        <name>ATP</name>
        <dbReference type="ChEBI" id="CHEBI:30616"/>
    </ligand>
</feature>
<feature type="site" description="Required for activity" evidence="1">
    <location>
        <position position="362"/>
    </location>
</feature>
<comment type="function">
    <text evidence="1">Produces ATP from ADP in the presence of a proton gradient across the membrane. The alpha chain is a regulatory subunit.</text>
</comment>
<comment type="catalytic activity">
    <reaction evidence="1">
        <text>ATP + H2O + 4 H(+)(in) = ADP + phosphate + 5 H(+)(out)</text>
        <dbReference type="Rhea" id="RHEA:57720"/>
        <dbReference type="ChEBI" id="CHEBI:15377"/>
        <dbReference type="ChEBI" id="CHEBI:15378"/>
        <dbReference type="ChEBI" id="CHEBI:30616"/>
        <dbReference type="ChEBI" id="CHEBI:43474"/>
        <dbReference type="ChEBI" id="CHEBI:456216"/>
        <dbReference type="EC" id="7.1.2.2"/>
    </reaction>
</comment>
<comment type="subunit">
    <text evidence="1">F-type ATPases have 2 components, CF(1) - the catalytic core - and CF(0) - the membrane proton channel. CF(1) has five subunits: alpha(3), beta(3), gamma(1), delta(1), epsilon(1). CF(0) has three main subunits: a(1), b(2) and c(9-12). The alpha and beta chains form an alternating ring which encloses part of the gamma chain. CF(1) is attached to CF(0) by a central stalk formed by the gamma and epsilon chains, while a peripheral stalk is formed by the delta and b chains.</text>
</comment>
<comment type="subcellular location">
    <subcellularLocation>
        <location evidence="1">Cell inner membrane</location>
        <topology evidence="1">Peripheral membrane protein</topology>
    </subcellularLocation>
</comment>
<comment type="similarity">
    <text evidence="1">Belongs to the ATPase alpha/beta chains family.</text>
</comment>
<reference key="1">
    <citation type="submission" date="2007-10" db="EMBL/GenBank/DDBJ databases">
        <title>Complete sequence of Desulfococcus oleovorans Hxd3.</title>
        <authorList>
            <consortium name="US DOE Joint Genome Institute"/>
            <person name="Copeland A."/>
            <person name="Lucas S."/>
            <person name="Lapidus A."/>
            <person name="Barry K."/>
            <person name="Glavina del Rio T."/>
            <person name="Dalin E."/>
            <person name="Tice H."/>
            <person name="Pitluck S."/>
            <person name="Kiss H."/>
            <person name="Brettin T."/>
            <person name="Bruce D."/>
            <person name="Detter J.C."/>
            <person name="Han C."/>
            <person name="Schmutz J."/>
            <person name="Larimer F."/>
            <person name="Land M."/>
            <person name="Hauser L."/>
            <person name="Kyrpides N."/>
            <person name="Kim E."/>
            <person name="Wawrik B."/>
            <person name="Richardson P."/>
        </authorList>
    </citation>
    <scope>NUCLEOTIDE SEQUENCE [LARGE SCALE GENOMIC DNA]</scope>
    <source>
        <strain>DSM 6200 / JCM 39069 / Hxd3</strain>
    </source>
</reference>
<accession>A8ZU99</accession>
<protein>
    <recommendedName>
        <fullName evidence="1">ATP synthase subunit alpha</fullName>
        <ecNumber evidence="1">7.1.2.2</ecNumber>
    </recommendedName>
    <alternativeName>
        <fullName evidence="1">ATP synthase F1 sector subunit alpha</fullName>
    </alternativeName>
    <alternativeName>
        <fullName evidence="1">F-ATPase subunit alpha</fullName>
    </alternativeName>
</protein>
<dbReference type="EC" id="7.1.2.2" evidence="1"/>
<dbReference type="EMBL" id="CP000859">
    <property type="protein sequence ID" value="ABW66411.1"/>
    <property type="molecule type" value="Genomic_DNA"/>
</dbReference>
<dbReference type="RefSeq" id="WP_012174030.1">
    <property type="nucleotide sequence ID" value="NC_009943.1"/>
</dbReference>
<dbReference type="SMR" id="A8ZU99"/>
<dbReference type="STRING" id="96561.Dole_0601"/>
<dbReference type="KEGG" id="dol:Dole_0601"/>
<dbReference type="eggNOG" id="COG0056">
    <property type="taxonomic scope" value="Bacteria"/>
</dbReference>
<dbReference type="HOGENOM" id="CLU_010091_2_1_7"/>
<dbReference type="OrthoDB" id="9803053at2"/>
<dbReference type="Proteomes" id="UP000008561">
    <property type="component" value="Chromosome"/>
</dbReference>
<dbReference type="GO" id="GO:0005886">
    <property type="term" value="C:plasma membrane"/>
    <property type="evidence" value="ECO:0007669"/>
    <property type="project" value="UniProtKB-SubCell"/>
</dbReference>
<dbReference type="GO" id="GO:0045259">
    <property type="term" value="C:proton-transporting ATP synthase complex"/>
    <property type="evidence" value="ECO:0007669"/>
    <property type="project" value="UniProtKB-KW"/>
</dbReference>
<dbReference type="GO" id="GO:0043531">
    <property type="term" value="F:ADP binding"/>
    <property type="evidence" value="ECO:0007669"/>
    <property type="project" value="TreeGrafter"/>
</dbReference>
<dbReference type="GO" id="GO:0005524">
    <property type="term" value="F:ATP binding"/>
    <property type="evidence" value="ECO:0007669"/>
    <property type="project" value="UniProtKB-UniRule"/>
</dbReference>
<dbReference type="GO" id="GO:0046933">
    <property type="term" value="F:proton-transporting ATP synthase activity, rotational mechanism"/>
    <property type="evidence" value="ECO:0007669"/>
    <property type="project" value="UniProtKB-UniRule"/>
</dbReference>
<dbReference type="CDD" id="cd18113">
    <property type="entry name" value="ATP-synt_F1_alpha_C"/>
    <property type="match status" value="1"/>
</dbReference>
<dbReference type="CDD" id="cd18116">
    <property type="entry name" value="ATP-synt_F1_alpha_N"/>
    <property type="match status" value="1"/>
</dbReference>
<dbReference type="CDD" id="cd01132">
    <property type="entry name" value="F1-ATPase_alpha_CD"/>
    <property type="match status" value="1"/>
</dbReference>
<dbReference type="FunFam" id="1.20.150.20:FF:000001">
    <property type="entry name" value="ATP synthase subunit alpha"/>
    <property type="match status" value="1"/>
</dbReference>
<dbReference type="FunFam" id="2.40.30.20:FF:000001">
    <property type="entry name" value="ATP synthase subunit alpha"/>
    <property type="match status" value="1"/>
</dbReference>
<dbReference type="FunFam" id="3.40.50.300:FF:000002">
    <property type="entry name" value="ATP synthase subunit alpha"/>
    <property type="match status" value="1"/>
</dbReference>
<dbReference type="Gene3D" id="2.40.30.20">
    <property type="match status" value="1"/>
</dbReference>
<dbReference type="Gene3D" id="1.20.150.20">
    <property type="entry name" value="ATP synthase alpha/beta chain, C-terminal domain"/>
    <property type="match status" value="1"/>
</dbReference>
<dbReference type="Gene3D" id="3.40.50.300">
    <property type="entry name" value="P-loop containing nucleotide triphosphate hydrolases"/>
    <property type="match status" value="1"/>
</dbReference>
<dbReference type="HAMAP" id="MF_01346">
    <property type="entry name" value="ATP_synth_alpha_bact"/>
    <property type="match status" value="1"/>
</dbReference>
<dbReference type="InterPro" id="IPR023366">
    <property type="entry name" value="ATP_synth_asu-like_sf"/>
</dbReference>
<dbReference type="InterPro" id="IPR000793">
    <property type="entry name" value="ATP_synth_asu_C"/>
</dbReference>
<dbReference type="InterPro" id="IPR038376">
    <property type="entry name" value="ATP_synth_asu_C_sf"/>
</dbReference>
<dbReference type="InterPro" id="IPR033732">
    <property type="entry name" value="ATP_synth_F1_a_nt-bd_dom"/>
</dbReference>
<dbReference type="InterPro" id="IPR005294">
    <property type="entry name" value="ATP_synth_F1_asu"/>
</dbReference>
<dbReference type="InterPro" id="IPR020003">
    <property type="entry name" value="ATPase_a/bsu_AS"/>
</dbReference>
<dbReference type="InterPro" id="IPR004100">
    <property type="entry name" value="ATPase_F1/V1/A1_a/bsu_N"/>
</dbReference>
<dbReference type="InterPro" id="IPR036121">
    <property type="entry name" value="ATPase_F1/V1/A1_a/bsu_N_sf"/>
</dbReference>
<dbReference type="InterPro" id="IPR000194">
    <property type="entry name" value="ATPase_F1/V1/A1_a/bsu_nucl-bd"/>
</dbReference>
<dbReference type="InterPro" id="IPR027417">
    <property type="entry name" value="P-loop_NTPase"/>
</dbReference>
<dbReference type="NCBIfam" id="TIGR00962">
    <property type="entry name" value="atpA"/>
    <property type="match status" value="1"/>
</dbReference>
<dbReference type="NCBIfam" id="NF009884">
    <property type="entry name" value="PRK13343.1"/>
    <property type="match status" value="1"/>
</dbReference>
<dbReference type="PANTHER" id="PTHR48082">
    <property type="entry name" value="ATP SYNTHASE SUBUNIT ALPHA, MITOCHONDRIAL"/>
    <property type="match status" value="1"/>
</dbReference>
<dbReference type="PANTHER" id="PTHR48082:SF2">
    <property type="entry name" value="ATP SYNTHASE SUBUNIT ALPHA, MITOCHONDRIAL"/>
    <property type="match status" value="1"/>
</dbReference>
<dbReference type="Pfam" id="PF00006">
    <property type="entry name" value="ATP-synt_ab"/>
    <property type="match status" value="1"/>
</dbReference>
<dbReference type="Pfam" id="PF00306">
    <property type="entry name" value="ATP-synt_ab_C"/>
    <property type="match status" value="1"/>
</dbReference>
<dbReference type="Pfam" id="PF02874">
    <property type="entry name" value="ATP-synt_ab_N"/>
    <property type="match status" value="1"/>
</dbReference>
<dbReference type="PIRSF" id="PIRSF039088">
    <property type="entry name" value="F_ATPase_subunit_alpha"/>
    <property type="match status" value="1"/>
</dbReference>
<dbReference type="SUPFAM" id="SSF47917">
    <property type="entry name" value="C-terminal domain of alpha and beta subunits of F1 ATP synthase"/>
    <property type="match status" value="1"/>
</dbReference>
<dbReference type="SUPFAM" id="SSF50615">
    <property type="entry name" value="N-terminal domain of alpha and beta subunits of F1 ATP synthase"/>
    <property type="match status" value="1"/>
</dbReference>
<dbReference type="SUPFAM" id="SSF52540">
    <property type="entry name" value="P-loop containing nucleoside triphosphate hydrolases"/>
    <property type="match status" value="1"/>
</dbReference>
<dbReference type="PROSITE" id="PS00152">
    <property type="entry name" value="ATPASE_ALPHA_BETA"/>
    <property type="match status" value="1"/>
</dbReference>
<keyword id="KW-0066">ATP synthesis</keyword>
<keyword id="KW-0067">ATP-binding</keyword>
<keyword id="KW-0997">Cell inner membrane</keyword>
<keyword id="KW-1003">Cell membrane</keyword>
<keyword id="KW-0139">CF(1)</keyword>
<keyword id="KW-0375">Hydrogen ion transport</keyword>
<keyword id="KW-0406">Ion transport</keyword>
<keyword id="KW-0472">Membrane</keyword>
<keyword id="KW-0547">Nucleotide-binding</keyword>
<keyword id="KW-1185">Reference proteome</keyword>
<keyword id="KW-1278">Translocase</keyword>
<keyword id="KW-0813">Transport</keyword>
<organism>
    <name type="scientific">Desulfosudis oleivorans (strain DSM 6200 / JCM 39069 / Hxd3)</name>
    <name type="common">Desulfococcus oleovorans</name>
    <dbReference type="NCBI Taxonomy" id="96561"/>
    <lineage>
        <taxon>Bacteria</taxon>
        <taxon>Pseudomonadati</taxon>
        <taxon>Thermodesulfobacteriota</taxon>
        <taxon>Desulfobacteria</taxon>
        <taxon>Desulfobacterales</taxon>
        <taxon>Desulfosudaceae</taxon>
        <taxon>Desulfosudis</taxon>
    </lineage>
</organism>
<proteinExistence type="inferred from homology"/>
<evidence type="ECO:0000255" key="1">
    <source>
        <dbReference type="HAMAP-Rule" id="MF_01346"/>
    </source>
</evidence>